<organism evidence="12">
    <name type="scientific">Drosophila melanogaster</name>
    <name type="common">Fruit fly</name>
    <dbReference type="NCBI Taxonomy" id="7227"/>
    <lineage>
        <taxon>Eukaryota</taxon>
        <taxon>Metazoa</taxon>
        <taxon>Ecdysozoa</taxon>
        <taxon>Arthropoda</taxon>
        <taxon>Hexapoda</taxon>
        <taxon>Insecta</taxon>
        <taxon>Pterygota</taxon>
        <taxon>Neoptera</taxon>
        <taxon>Endopterygota</taxon>
        <taxon>Diptera</taxon>
        <taxon>Brachycera</taxon>
        <taxon>Muscomorpha</taxon>
        <taxon>Ephydroidea</taxon>
        <taxon>Drosophilidae</taxon>
        <taxon>Drosophila</taxon>
        <taxon>Sophophora</taxon>
    </lineage>
</organism>
<comment type="function">
    <text evidence="1 3 5">Accessory component of the DNA polymerase epsilon complex (By similarity). Participates in DNA repair and in chromosomal DNA replication (By similarity). Has a role in cell cycle progression (PubMed:19150446). Required for wing morphogenesis (PubMed:19150446).</text>
</comment>
<comment type="subunit">
    <text evidence="2">Component of the DNA polymerase epsilon complex consisting of four subunits: the catalytic subunit PolE1/DNApol-epsilon255 and the accessory subunits PolE2/DNApol-epsilon58, Chrac-14/DNApolE3 and PolE4/Mes4.</text>
</comment>
<comment type="subcellular location">
    <subcellularLocation>
        <location evidence="5">Nucleus</location>
    </subcellularLocation>
</comment>
<comment type="developmental stage">
    <text evidence="5">Expressed throughout all developmental stages (PubMed:19150446). In the third instar larva expressed in fat bodies, brain lobes, eye-antenna imaginal disks, wing imaginal disks, salivary glands and ovaries (PubMed:19150446).</text>
</comment>
<comment type="disruption phenotype">
    <text evidence="5">RNAi-mediated knockdown results in an atrophied wing phenotype characterized by increased induction of cell proliferation in wing disks but failed cell cycle progression.</text>
</comment>
<proteinExistence type="evidence at transcript level"/>
<sequence length="155" mass="17370">MASEELFEAEFSEEQDLEHQQAMETEEAELAETEEPLEITEESPDNPEAESTTEQLTEKPVTNGNKAPADNEAKMTQLPLARIRNIMKLDPDLHMANNEAVFIVAKAVELFIASLSRESYTYTAQSKKKTIQKRDVDMAISAVDSLLFLDGAMNF</sequence>
<reference evidence="12" key="1">
    <citation type="journal article" date="2000" name="Science">
        <title>The genome sequence of Drosophila melanogaster.</title>
        <authorList>
            <person name="Adams M.D."/>
            <person name="Celniker S.E."/>
            <person name="Holt R.A."/>
            <person name="Evans C.A."/>
            <person name="Gocayne J.D."/>
            <person name="Amanatides P.G."/>
            <person name="Scherer S.E."/>
            <person name="Li P.W."/>
            <person name="Hoskins R.A."/>
            <person name="Galle R.F."/>
            <person name="George R.A."/>
            <person name="Lewis S.E."/>
            <person name="Richards S."/>
            <person name="Ashburner M."/>
            <person name="Henderson S.N."/>
            <person name="Sutton G.G."/>
            <person name="Wortman J.R."/>
            <person name="Yandell M.D."/>
            <person name="Zhang Q."/>
            <person name="Chen L.X."/>
            <person name="Brandon R.C."/>
            <person name="Rogers Y.-H.C."/>
            <person name="Blazej R.G."/>
            <person name="Champe M."/>
            <person name="Pfeiffer B.D."/>
            <person name="Wan K.H."/>
            <person name="Doyle C."/>
            <person name="Baxter E.G."/>
            <person name="Helt G."/>
            <person name="Nelson C.R."/>
            <person name="Miklos G.L.G."/>
            <person name="Abril J.F."/>
            <person name="Agbayani A."/>
            <person name="An H.-J."/>
            <person name="Andrews-Pfannkoch C."/>
            <person name="Baldwin D."/>
            <person name="Ballew R.M."/>
            <person name="Basu A."/>
            <person name="Baxendale J."/>
            <person name="Bayraktaroglu L."/>
            <person name="Beasley E.M."/>
            <person name="Beeson K.Y."/>
            <person name="Benos P.V."/>
            <person name="Berman B.P."/>
            <person name="Bhandari D."/>
            <person name="Bolshakov S."/>
            <person name="Borkova D."/>
            <person name="Botchan M.R."/>
            <person name="Bouck J."/>
            <person name="Brokstein P."/>
            <person name="Brottier P."/>
            <person name="Burtis K.C."/>
            <person name="Busam D.A."/>
            <person name="Butler H."/>
            <person name="Cadieu E."/>
            <person name="Center A."/>
            <person name="Chandra I."/>
            <person name="Cherry J.M."/>
            <person name="Cawley S."/>
            <person name="Dahlke C."/>
            <person name="Davenport L.B."/>
            <person name="Davies P."/>
            <person name="de Pablos B."/>
            <person name="Delcher A."/>
            <person name="Deng Z."/>
            <person name="Mays A.D."/>
            <person name="Dew I."/>
            <person name="Dietz S.M."/>
            <person name="Dodson K."/>
            <person name="Doup L.E."/>
            <person name="Downes M."/>
            <person name="Dugan-Rocha S."/>
            <person name="Dunkov B.C."/>
            <person name="Dunn P."/>
            <person name="Durbin K.J."/>
            <person name="Evangelista C.C."/>
            <person name="Ferraz C."/>
            <person name="Ferriera S."/>
            <person name="Fleischmann W."/>
            <person name="Fosler C."/>
            <person name="Gabrielian A.E."/>
            <person name="Garg N.S."/>
            <person name="Gelbart W.M."/>
            <person name="Glasser K."/>
            <person name="Glodek A."/>
            <person name="Gong F."/>
            <person name="Gorrell J.H."/>
            <person name="Gu Z."/>
            <person name="Guan P."/>
            <person name="Harris M."/>
            <person name="Harris N.L."/>
            <person name="Harvey D.A."/>
            <person name="Heiman T.J."/>
            <person name="Hernandez J.R."/>
            <person name="Houck J."/>
            <person name="Hostin D."/>
            <person name="Houston K.A."/>
            <person name="Howland T.J."/>
            <person name="Wei M.-H."/>
            <person name="Ibegwam C."/>
            <person name="Jalali M."/>
            <person name="Kalush F."/>
            <person name="Karpen G.H."/>
            <person name="Ke Z."/>
            <person name="Kennison J.A."/>
            <person name="Ketchum K.A."/>
            <person name="Kimmel B.E."/>
            <person name="Kodira C.D."/>
            <person name="Kraft C.L."/>
            <person name="Kravitz S."/>
            <person name="Kulp D."/>
            <person name="Lai Z."/>
            <person name="Lasko P."/>
            <person name="Lei Y."/>
            <person name="Levitsky A.A."/>
            <person name="Li J.H."/>
            <person name="Li Z."/>
            <person name="Liang Y."/>
            <person name="Lin X."/>
            <person name="Liu X."/>
            <person name="Mattei B."/>
            <person name="McIntosh T.C."/>
            <person name="McLeod M.P."/>
            <person name="McPherson D."/>
            <person name="Merkulov G."/>
            <person name="Milshina N.V."/>
            <person name="Mobarry C."/>
            <person name="Morris J."/>
            <person name="Moshrefi A."/>
            <person name="Mount S.M."/>
            <person name="Moy M."/>
            <person name="Murphy B."/>
            <person name="Murphy L."/>
            <person name="Muzny D.M."/>
            <person name="Nelson D.L."/>
            <person name="Nelson D.R."/>
            <person name="Nelson K.A."/>
            <person name="Nixon K."/>
            <person name="Nusskern D.R."/>
            <person name="Pacleb J.M."/>
            <person name="Palazzolo M."/>
            <person name="Pittman G.S."/>
            <person name="Pan S."/>
            <person name="Pollard J."/>
            <person name="Puri V."/>
            <person name="Reese M.G."/>
            <person name="Reinert K."/>
            <person name="Remington K."/>
            <person name="Saunders R.D.C."/>
            <person name="Scheeler F."/>
            <person name="Shen H."/>
            <person name="Shue B.C."/>
            <person name="Siden-Kiamos I."/>
            <person name="Simpson M."/>
            <person name="Skupski M.P."/>
            <person name="Smith T.J."/>
            <person name="Spier E."/>
            <person name="Spradling A.C."/>
            <person name="Stapleton M."/>
            <person name="Strong R."/>
            <person name="Sun E."/>
            <person name="Svirskas R."/>
            <person name="Tector C."/>
            <person name="Turner R."/>
            <person name="Venter E."/>
            <person name="Wang A.H."/>
            <person name="Wang X."/>
            <person name="Wang Z.-Y."/>
            <person name="Wassarman D.A."/>
            <person name="Weinstock G.M."/>
            <person name="Weissenbach J."/>
            <person name="Williams S.M."/>
            <person name="Woodage T."/>
            <person name="Worley K.C."/>
            <person name="Wu D."/>
            <person name="Yang S."/>
            <person name="Yao Q.A."/>
            <person name="Ye J."/>
            <person name="Yeh R.-F."/>
            <person name="Zaveri J.S."/>
            <person name="Zhan M."/>
            <person name="Zhang G."/>
            <person name="Zhao Q."/>
            <person name="Zheng L."/>
            <person name="Zheng X.H."/>
            <person name="Zhong F.N."/>
            <person name="Zhong W."/>
            <person name="Zhou X."/>
            <person name="Zhu S.C."/>
            <person name="Zhu X."/>
            <person name="Smith H.O."/>
            <person name="Gibbs R.A."/>
            <person name="Myers E.W."/>
            <person name="Rubin G.M."/>
            <person name="Venter J.C."/>
        </authorList>
    </citation>
    <scope>NUCLEOTIDE SEQUENCE [LARGE SCALE GENOMIC DNA]</scope>
    <source>
        <strain evidence="12">Berkeley</strain>
    </source>
</reference>
<reference evidence="12" key="2">
    <citation type="journal article" date="2002" name="Genome Biol.">
        <title>Annotation of the Drosophila melanogaster euchromatic genome: a systematic review.</title>
        <authorList>
            <person name="Misra S."/>
            <person name="Crosby M.A."/>
            <person name="Mungall C.J."/>
            <person name="Matthews B.B."/>
            <person name="Campbell K.S."/>
            <person name="Hradecky P."/>
            <person name="Huang Y."/>
            <person name="Kaminker J.S."/>
            <person name="Millburn G.H."/>
            <person name="Prochnik S.E."/>
            <person name="Smith C.D."/>
            <person name="Tupy J.L."/>
            <person name="Whitfield E.J."/>
            <person name="Bayraktaroglu L."/>
            <person name="Berman B.P."/>
            <person name="Bettencourt B.R."/>
            <person name="Celniker S.E."/>
            <person name="de Grey A.D.N.J."/>
            <person name="Drysdale R.A."/>
            <person name="Harris N.L."/>
            <person name="Richter J."/>
            <person name="Russo S."/>
            <person name="Schroeder A.J."/>
            <person name="Shu S.Q."/>
            <person name="Stapleton M."/>
            <person name="Yamada C."/>
            <person name="Ashburner M."/>
            <person name="Gelbart W.M."/>
            <person name="Rubin G.M."/>
            <person name="Lewis S.E."/>
        </authorList>
    </citation>
    <scope>GENOME REANNOTATION</scope>
    <source>
        <strain evidence="12">Berkeley</strain>
    </source>
</reference>
<reference evidence="9 10" key="3">
    <citation type="submission" date="2016-07" db="EMBL/GenBank/DDBJ databases">
        <authorList>
            <person name="Booth B."/>
            <person name="Calderwood M."/>
            <person name="Carlson J."/>
            <person name="Celniker S."/>
            <person name="Frise E."/>
            <person name="George R."/>
            <person name="Hao T."/>
            <person name="Hu Y."/>
            <person name="Hill D."/>
            <person name="Mohr S."/>
            <person name="Pacleb J."/>
            <person name="Park S."/>
            <person name="Perrimon N."/>
            <person name="Stapleton M."/>
            <person name="Spirohn K."/>
            <person name="Yu C."/>
            <person name="Wan K."/>
            <person name="Vidal M."/>
        </authorList>
    </citation>
    <scope>NUCLEOTIDE SEQUENCE [LARGE SCALE MRNA]</scope>
</reference>
<reference evidence="8" key="4">
    <citation type="journal article" date="2002" name="Genome Biol.">
        <title>A Drosophila full-length cDNA resource.</title>
        <authorList>
            <person name="Stapleton M."/>
            <person name="Carlson J.W."/>
            <person name="Brokstein P."/>
            <person name="Yu C."/>
            <person name="Champe M."/>
            <person name="George R.A."/>
            <person name="Guarin H."/>
            <person name="Kronmiller B."/>
            <person name="Pacleb J.M."/>
            <person name="Park S."/>
            <person name="Wan K.H."/>
            <person name="Rubin G.M."/>
            <person name="Celniker S.E."/>
        </authorList>
    </citation>
    <scope>NUCLEOTIDE SEQUENCE [LARGE SCALE MRNA] OF 6-155</scope>
    <source>
        <strain evidence="8">Berkeley</strain>
        <tissue evidence="8">Ovary</tissue>
    </source>
</reference>
<reference evidence="7" key="5">
    <citation type="journal article" date="2009" name="Exp. Cell Res.">
        <title>Identification of the Drosophila Mes4 gene as a novel target of the transcription factor DREF.</title>
        <authorList>
            <person name="Suyari O."/>
            <person name="Ida H."/>
            <person name="Yoshioka Y."/>
            <person name="Kato Y."/>
            <person name="Hashimoto R."/>
            <person name="Yamaguchi M."/>
        </authorList>
    </citation>
    <scope>FUNCTION</scope>
    <scope>SUBCELLULAR LOCATION</scope>
    <scope>DEVELOPMENTAL STAGE</scope>
    <scope>DISRUPTION PHENOTYPE</scope>
</reference>
<evidence type="ECO:0000250" key="1">
    <source>
        <dbReference type="UniProtKB" id="P27344"/>
    </source>
</evidence>
<evidence type="ECO:0000250" key="2">
    <source>
        <dbReference type="UniProtKB" id="Q9NR33"/>
    </source>
</evidence>
<evidence type="ECO:0000250" key="3">
    <source>
        <dbReference type="UniProtKB" id="Q9NRF9"/>
    </source>
</evidence>
<evidence type="ECO:0000256" key="4">
    <source>
        <dbReference type="SAM" id="MobiDB-lite"/>
    </source>
</evidence>
<evidence type="ECO:0000269" key="5">
    <source>
    </source>
</evidence>
<evidence type="ECO:0000303" key="6">
    <source>
    </source>
</evidence>
<evidence type="ECO:0000305" key="7"/>
<evidence type="ECO:0000312" key="8">
    <source>
        <dbReference type="EMBL" id="AAM50718.1"/>
    </source>
</evidence>
<evidence type="ECO:0000312" key="9">
    <source>
        <dbReference type="EMBL" id="AAY55161.1"/>
    </source>
</evidence>
<evidence type="ECO:0000312" key="10">
    <source>
        <dbReference type="EMBL" id="ANY27717.1"/>
    </source>
</evidence>
<evidence type="ECO:0000312" key="11">
    <source>
        <dbReference type="FlyBase" id="FBgn0034726"/>
    </source>
</evidence>
<evidence type="ECO:0000312" key="12">
    <source>
        <dbReference type="Proteomes" id="UP000000803"/>
    </source>
</evidence>
<dbReference type="EMBL" id="AE013599">
    <property type="protein sequence ID" value="AAF46843.1"/>
    <property type="molecule type" value="Genomic_DNA"/>
</dbReference>
<dbReference type="EMBL" id="AE013599">
    <property type="protein sequence ID" value="ACZ94525.1"/>
    <property type="molecule type" value="Genomic_DNA"/>
</dbReference>
<dbReference type="EMBL" id="AY118858">
    <property type="protein sequence ID" value="AAM50718.1"/>
    <property type="molecule type" value="mRNA"/>
</dbReference>
<dbReference type="EMBL" id="BT022745">
    <property type="protein sequence ID" value="AAY55161.1"/>
    <property type="molecule type" value="mRNA"/>
</dbReference>
<dbReference type="EMBL" id="KX531907">
    <property type="protein sequence ID" value="ANY27717.1"/>
    <property type="molecule type" value="mRNA"/>
</dbReference>
<dbReference type="RefSeq" id="NP_001163253.1">
    <property type="nucleotide sequence ID" value="NM_001169782.2"/>
</dbReference>
<dbReference type="RefSeq" id="NP_611669.1">
    <property type="nucleotide sequence ID" value="NM_137825.4"/>
</dbReference>
<dbReference type="SMR" id="Q9W256"/>
<dbReference type="ComplexPortal" id="CPX-2422">
    <property type="entry name" value="DNA polymerase epsilon complex"/>
</dbReference>
<dbReference type="FunCoup" id="Q9W256">
    <property type="interactions" value="1571"/>
</dbReference>
<dbReference type="IntAct" id="Q9W256">
    <property type="interactions" value="27"/>
</dbReference>
<dbReference type="STRING" id="7227.FBpp0290461"/>
<dbReference type="PaxDb" id="7227-FBpp0290461"/>
<dbReference type="DNASU" id="37560"/>
<dbReference type="EnsemblMetazoa" id="FBtr0071827">
    <property type="protein sequence ID" value="FBpp0071738"/>
    <property type="gene ID" value="FBgn0034726"/>
</dbReference>
<dbReference type="EnsemblMetazoa" id="FBtr0301243">
    <property type="protein sequence ID" value="FBpp0290461"/>
    <property type="gene ID" value="FBgn0034726"/>
</dbReference>
<dbReference type="GeneID" id="37560"/>
<dbReference type="KEGG" id="dme:Dmel_CG11301"/>
<dbReference type="UCSC" id="CG11301-RA">
    <property type="organism name" value="d. melanogaster"/>
</dbReference>
<dbReference type="AGR" id="FB:FBgn0034726"/>
<dbReference type="CTD" id="56655"/>
<dbReference type="FlyBase" id="FBgn0034726">
    <property type="gene designation" value="PolE4"/>
</dbReference>
<dbReference type="VEuPathDB" id="VectorBase:FBgn0034726"/>
<dbReference type="eggNOG" id="KOG1658">
    <property type="taxonomic scope" value="Eukaryota"/>
</dbReference>
<dbReference type="GeneTree" id="ENSGT00940000160888"/>
<dbReference type="HOGENOM" id="CLU_045277_8_1_1"/>
<dbReference type="InParanoid" id="Q9W256"/>
<dbReference type="OMA" id="KTSEHEH"/>
<dbReference type="OrthoDB" id="636685at2759"/>
<dbReference type="PhylomeDB" id="Q9W256"/>
<dbReference type="Reactome" id="R-DME-110314">
    <property type="pathway name" value="Recognition of DNA damage by PCNA-containing replication complex"/>
</dbReference>
<dbReference type="Reactome" id="R-DME-5651801">
    <property type="pathway name" value="PCNA-Dependent Long Patch Base Excision Repair"/>
</dbReference>
<dbReference type="Reactome" id="R-DME-5656169">
    <property type="pathway name" value="Termination of translesion DNA synthesis"/>
</dbReference>
<dbReference type="Reactome" id="R-DME-5696400">
    <property type="pathway name" value="Dual Incision in GG-NER"/>
</dbReference>
<dbReference type="Reactome" id="R-DME-6782135">
    <property type="pathway name" value="Dual incision in TC-NER"/>
</dbReference>
<dbReference type="Reactome" id="R-DME-68952">
    <property type="pathway name" value="DNA replication initiation"/>
</dbReference>
<dbReference type="Reactome" id="R-DME-68962">
    <property type="pathway name" value="Activation of the pre-replicative complex"/>
</dbReference>
<dbReference type="BioGRID-ORCS" id="37560">
    <property type="hits" value="0 hits in 3 CRISPR screens"/>
</dbReference>
<dbReference type="ChiTaRS" id="Mes4">
    <property type="organism name" value="fly"/>
</dbReference>
<dbReference type="GenomeRNAi" id="37560"/>
<dbReference type="PRO" id="PR:Q9W256"/>
<dbReference type="Proteomes" id="UP000000803">
    <property type="component" value="Chromosome 2R"/>
</dbReference>
<dbReference type="Bgee" id="FBgn0034726">
    <property type="expression patterns" value="Expressed in secondary oocyte and 111 other cell types or tissues"/>
</dbReference>
<dbReference type="GO" id="GO:0008622">
    <property type="term" value="C:epsilon DNA polymerase complex"/>
    <property type="evidence" value="ECO:0000250"/>
    <property type="project" value="FlyBase"/>
</dbReference>
<dbReference type="GO" id="GO:0005634">
    <property type="term" value="C:nucleus"/>
    <property type="evidence" value="ECO:0000318"/>
    <property type="project" value="GO_Central"/>
</dbReference>
<dbReference type="GO" id="GO:0046982">
    <property type="term" value="F:protein heterodimerization activity"/>
    <property type="evidence" value="ECO:0007669"/>
    <property type="project" value="InterPro"/>
</dbReference>
<dbReference type="GO" id="GO:0006261">
    <property type="term" value="P:DNA-templated DNA replication"/>
    <property type="evidence" value="ECO:0000250"/>
    <property type="project" value="FlyBase"/>
</dbReference>
<dbReference type="CDD" id="cd22929">
    <property type="entry name" value="HFD_POLE4-like"/>
    <property type="match status" value="1"/>
</dbReference>
<dbReference type="Gene3D" id="1.10.20.10">
    <property type="entry name" value="Histone, subunit A"/>
    <property type="match status" value="1"/>
</dbReference>
<dbReference type="InterPro" id="IPR003958">
    <property type="entry name" value="CBFA_NFYB_domain"/>
</dbReference>
<dbReference type="InterPro" id="IPR009072">
    <property type="entry name" value="Histone-fold"/>
</dbReference>
<dbReference type="InterPro" id="IPR050568">
    <property type="entry name" value="Transcr_DNA_Rep_Reg"/>
</dbReference>
<dbReference type="PANTHER" id="PTHR10252:SF79">
    <property type="entry name" value="DNA POLYMERASE EPSILON SUBUNIT 4"/>
    <property type="match status" value="1"/>
</dbReference>
<dbReference type="PANTHER" id="PTHR10252">
    <property type="entry name" value="HISTONE-LIKE TRANSCRIPTION FACTOR CCAAT-RELATED"/>
    <property type="match status" value="1"/>
</dbReference>
<dbReference type="Pfam" id="PF00808">
    <property type="entry name" value="CBFD_NFYB_HMF"/>
    <property type="match status" value="1"/>
</dbReference>
<dbReference type="SUPFAM" id="SSF47113">
    <property type="entry name" value="Histone-fold"/>
    <property type="match status" value="1"/>
</dbReference>
<name>DPOE4_DROME</name>
<keyword id="KW-0539">Nucleus</keyword>
<keyword id="KW-1185">Reference proteome</keyword>
<gene>
    <name evidence="11" type="primary">PolE4</name>
    <name evidence="7" type="synonym">DNApolE4</name>
    <name evidence="6" type="synonym">Mes4</name>
    <name evidence="11" type="synonym">NF-Yc</name>
    <name evidence="11" type="ORF">CG11301</name>
</gene>
<protein>
    <recommendedName>
        <fullName evidence="11">DNA polymerase epsilon subunit 4</fullName>
    </recommendedName>
    <alternativeName>
        <fullName evidence="2">DNA polymerase II subunit 4</fullName>
    </alternativeName>
    <alternativeName>
        <fullName evidence="6">Mesoderm-expressed 4</fullName>
    </alternativeName>
</protein>
<accession>Q9W256</accession>
<accession>Q8MSF2</accession>
<feature type="chain" id="PRO_0000448436" description="DNA polymerase epsilon subunit 4" evidence="7">
    <location>
        <begin position="1"/>
        <end position="155"/>
    </location>
</feature>
<feature type="region of interest" description="Disordered" evidence="4">
    <location>
        <begin position="1"/>
        <end position="76"/>
    </location>
</feature>
<feature type="compositionally biased region" description="Acidic residues" evidence="4">
    <location>
        <begin position="1"/>
        <end position="16"/>
    </location>
</feature>
<feature type="compositionally biased region" description="Acidic residues" evidence="4">
    <location>
        <begin position="24"/>
        <end position="48"/>
    </location>
</feature>
<feature type="compositionally biased region" description="Polar residues" evidence="4">
    <location>
        <begin position="49"/>
        <end position="65"/>
    </location>
</feature>
<feature type="sequence conflict" description="In Ref. 4; AAM50718." evidence="7" ref="4">
    <original>T</original>
    <variation>A</variation>
    <location>
        <position position="57"/>
    </location>
</feature>